<protein>
    <recommendedName>
        <fullName evidence="1">Thymidylate kinase</fullName>
        <ecNumber evidence="1">2.7.4.9</ecNumber>
    </recommendedName>
    <alternativeName>
        <fullName evidence="1">dTMP kinase</fullName>
    </alternativeName>
</protein>
<accession>A1JN89</accession>
<dbReference type="EC" id="2.7.4.9" evidence="1"/>
<dbReference type="EMBL" id="AM286415">
    <property type="protein sequence ID" value="CAL11714.1"/>
    <property type="molecule type" value="Genomic_DNA"/>
</dbReference>
<dbReference type="RefSeq" id="WP_005170710.1">
    <property type="nucleotide sequence ID" value="NC_008800.1"/>
</dbReference>
<dbReference type="RefSeq" id="YP_001005929.1">
    <property type="nucleotide sequence ID" value="NC_008800.1"/>
</dbReference>
<dbReference type="SMR" id="A1JN89"/>
<dbReference type="KEGG" id="yen:YE1640"/>
<dbReference type="PATRIC" id="fig|393305.7.peg.1778"/>
<dbReference type="eggNOG" id="COG0125">
    <property type="taxonomic scope" value="Bacteria"/>
</dbReference>
<dbReference type="HOGENOM" id="CLU_049131_0_1_6"/>
<dbReference type="OrthoDB" id="9774907at2"/>
<dbReference type="Proteomes" id="UP000000642">
    <property type="component" value="Chromosome"/>
</dbReference>
<dbReference type="GO" id="GO:0005829">
    <property type="term" value="C:cytosol"/>
    <property type="evidence" value="ECO:0007669"/>
    <property type="project" value="TreeGrafter"/>
</dbReference>
<dbReference type="GO" id="GO:0005524">
    <property type="term" value="F:ATP binding"/>
    <property type="evidence" value="ECO:0007669"/>
    <property type="project" value="UniProtKB-UniRule"/>
</dbReference>
<dbReference type="GO" id="GO:0004798">
    <property type="term" value="F:dTMP kinase activity"/>
    <property type="evidence" value="ECO:0007669"/>
    <property type="project" value="UniProtKB-UniRule"/>
</dbReference>
<dbReference type="GO" id="GO:0006233">
    <property type="term" value="P:dTDP biosynthetic process"/>
    <property type="evidence" value="ECO:0007669"/>
    <property type="project" value="InterPro"/>
</dbReference>
<dbReference type="GO" id="GO:0006235">
    <property type="term" value="P:dTTP biosynthetic process"/>
    <property type="evidence" value="ECO:0007669"/>
    <property type="project" value="UniProtKB-UniRule"/>
</dbReference>
<dbReference type="GO" id="GO:0006227">
    <property type="term" value="P:dUDP biosynthetic process"/>
    <property type="evidence" value="ECO:0007669"/>
    <property type="project" value="TreeGrafter"/>
</dbReference>
<dbReference type="CDD" id="cd01672">
    <property type="entry name" value="TMPK"/>
    <property type="match status" value="1"/>
</dbReference>
<dbReference type="FunFam" id="3.40.50.300:FF:000321">
    <property type="entry name" value="Thymidylate kinase"/>
    <property type="match status" value="1"/>
</dbReference>
<dbReference type="Gene3D" id="3.40.50.300">
    <property type="entry name" value="P-loop containing nucleotide triphosphate hydrolases"/>
    <property type="match status" value="1"/>
</dbReference>
<dbReference type="HAMAP" id="MF_00165">
    <property type="entry name" value="Thymidylate_kinase"/>
    <property type="match status" value="1"/>
</dbReference>
<dbReference type="InterPro" id="IPR027417">
    <property type="entry name" value="P-loop_NTPase"/>
</dbReference>
<dbReference type="InterPro" id="IPR039430">
    <property type="entry name" value="Thymidylate_kin-like_dom"/>
</dbReference>
<dbReference type="InterPro" id="IPR018095">
    <property type="entry name" value="Thymidylate_kin_CS"/>
</dbReference>
<dbReference type="InterPro" id="IPR018094">
    <property type="entry name" value="Thymidylate_kinase"/>
</dbReference>
<dbReference type="NCBIfam" id="TIGR00041">
    <property type="entry name" value="DTMP_kinase"/>
    <property type="match status" value="1"/>
</dbReference>
<dbReference type="PANTHER" id="PTHR10344">
    <property type="entry name" value="THYMIDYLATE KINASE"/>
    <property type="match status" value="1"/>
</dbReference>
<dbReference type="PANTHER" id="PTHR10344:SF4">
    <property type="entry name" value="UMP-CMP KINASE 2, MITOCHONDRIAL"/>
    <property type="match status" value="1"/>
</dbReference>
<dbReference type="Pfam" id="PF02223">
    <property type="entry name" value="Thymidylate_kin"/>
    <property type="match status" value="1"/>
</dbReference>
<dbReference type="SUPFAM" id="SSF52540">
    <property type="entry name" value="P-loop containing nucleoside triphosphate hydrolases"/>
    <property type="match status" value="1"/>
</dbReference>
<dbReference type="PROSITE" id="PS01331">
    <property type="entry name" value="THYMIDYLATE_KINASE"/>
    <property type="match status" value="1"/>
</dbReference>
<evidence type="ECO:0000255" key="1">
    <source>
        <dbReference type="HAMAP-Rule" id="MF_00165"/>
    </source>
</evidence>
<comment type="function">
    <text evidence="1">Phosphorylation of dTMP to form dTDP in both de novo and salvage pathways of dTTP synthesis.</text>
</comment>
<comment type="catalytic activity">
    <reaction evidence="1">
        <text>dTMP + ATP = dTDP + ADP</text>
        <dbReference type="Rhea" id="RHEA:13517"/>
        <dbReference type="ChEBI" id="CHEBI:30616"/>
        <dbReference type="ChEBI" id="CHEBI:58369"/>
        <dbReference type="ChEBI" id="CHEBI:63528"/>
        <dbReference type="ChEBI" id="CHEBI:456216"/>
        <dbReference type="EC" id="2.7.4.9"/>
    </reaction>
</comment>
<comment type="similarity">
    <text evidence="1">Belongs to the thymidylate kinase family.</text>
</comment>
<organism>
    <name type="scientific">Yersinia enterocolitica serotype O:8 / biotype 1B (strain NCTC 13174 / 8081)</name>
    <dbReference type="NCBI Taxonomy" id="393305"/>
    <lineage>
        <taxon>Bacteria</taxon>
        <taxon>Pseudomonadati</taxon>
        <taxon>Pseudomonadota</taxon>
        <taxon>Gammaproteobacteria</taxon>
        <taxon>Enterobacterales</taxon>
        <taxon>Yersiniaceae</taxon>
        <taxon>Yersinia</taxon>
    </lineage>
</organism>
<gene>
    <name evidence="1" type="primary">tmk</name>
    <name type="ordered locus">YE1640</name>
</gene>
<proteinExistence type="inferred from homology"/>
<reference key="1">
    <citation type="journal article" date="2006" name="PLoS Genet.">
        <title>The complete genome sequence and comparative genome analysis of the high pathogenicity Yersinia enterocolitica strain 8081.</title>
        <authorList>
            <person name="Thomson N.R."/>
            <person name="Howard S."/>
            <person name="Wren B.W."/>
            <person name="Holden M.T.G."/>
            <person name="Crossman L."/>
            <person name="Challis G.L."/>
            <person name="Churcher C."/>
            <person name="Mungall K."/>
            <person name="Brooks K."/>
            <person name="Chillingworth T."/>
            <person name="Feltwell T."/>
            <person name="Abdellah Z."/>
            <person name="Hauser H."/>
            <person name="Jagels K."/>
            <person name="Maddison M."/>
            <person name="Moule S."/>
            <person name="Sanders M."/>
            <person name="Whitehead S."/>
            <person name="Quail M.A."/>
            <person name="Dougan G."/>
            <person name="Parkhill J."/>
            <person name="Prentice M.B."/>
        </authorList>
    </citation>
    <scope>NUCLEOTIDE SEQUENCE [LARGE SCALE GENOMIC DNA]</scope>
    <source>
        <strain>NCTC 13174 / 8081</strain>
    </source>
</reference>
<name>KTHY_YERE8</name>
<sequence length="212" mass="23353">MNSKFIVIEGLEGAGKTTARDTVVATLRAQGINDIVFTREPGGTPLAEKLRDLIKQGIDGEVLTDKAEVLMLYAARVQLVENVIKPALARGSWVVGDRHDLSSQAYQGGGRGIDINLMTSLRDTVLGEFRPDLTLYLDLPPVIGLARARARGELDRIEQESLAFFERTRERYLELAATDSSIKTIDASQPLEQVSESISQVLKQWLTSRETA</sequence>
<feature type="chain" id="PRO_1000023316" description="Thymidylate kinase">
    <location>
        <begin position="1"/>
        <end position="212"/>
    </location>
</feature>
<feature type="binding site" evidence="1">
    <location>
        <begin position="10"/>
        <end position="17"/>
    </location>
    <ligand>
        <name>ATP</name>
        <dbReference type="ChEBI" id="CHEBI:30616"/>
    </ligand>
</feature>
<keyword id="KW-0067">ATP-binding</keyword>
<keyword id="KW-0418">Kinase</keyword>
<keyword id="KW-0545">Nucleotide biosynthesis</keyword>
<keyword id="KW-0547">Nucleotide-binding</keyword>
<keyword id="KW-0808">Transferase</keyword>